<accession>P0CQ69</accession>
<accession>Q55ZU0</accession>
<accession>Q5KP51</accession>
<proteinExistence type="inferred from homology"/>
<gene>
    <name evidence="1" type="primary">RMT2</name>
    <name type="ordered locus">CNBA4000</name>
</gene>
<evidence type="ECO:0000250" key="1">
    <source>
        <dbReference type="UniProtKB" id="Q03305"/>
    </source>
</evidence>
<evidence type="ECO:0000255" key="2">
    <source>
        <dbReference type="PROSITE-ProRule" id="PRU00892"/>
    </source>
</evidence>
<evidence type="ECO:0000305" key="3"/>
<keyword id="KW-0040">ANK repeat</keyword>
<keyword id="KW-0963">Cytoplasm</keyword>
<keyword id="KW-0489">Methyltransferase</keyword>
<keyword id="KW-0539">Nucleus</keyword>
<keyword id="KW-0677">Repeat</keyword>
<keyword id="KW-0949">S-adenosyl-L-methionine</keyword>
<keyword id="KW-0808">Transferase</keyword>
<sequence length="363" mass="40439">MDMDSAHLDSSLLTLAFRLIKAAQTAAPSVLADLLAEGAPAWFQDDDLGWSCLHYAAERKEPECLEVLLQGGAVWNAVDKWGRTAGEICLSLGDEEGWSIIRNEGIRSEDKTSAGDNLVFLKSKLTWDVGKDGKERVLDADGNGVMMGWEEPLSYCIVVEHVKRLTEEHPKAELGAEGMSILNVGFGLGIVDRLFQECDPKPSHHTIIEAHPQVLEYIHKKGVHLLPNVRILQGRWQDWLLDGEKVGDVLSGTPDGMGFDAIFVDTFAEGYEDLKAFFEVIPDILNADNGRFSFWNGLGATNPTIYAVSSSLAELHLEDVGLQVEWHDVLIPESMREEVWKGVRRRYWDLPGYRLPIAKMSLI</sequence>
<organism>
    <name type="scientific">Cryptococcus neoformans var. neoformans serotype D (strain B-3501A)</name>
    <name type="common">Filobasidiella neoformans</name>
    <dbReference type="NCBI Taxonomy" id="283643"/>
    <lineage>
        <taxon>Eukaryota</taxon>
        <taxon>Fungi</taxon>
        <taxon>Dikarya</taxon>
        <taxon>Basidiomycota</taxon>
        <taxon>Agaricomycotina</taxon>
        <taxon>Tremellomycetes</taxon>
        <taxon>Tremellales</taxon>
        <taxon>Cryptococcaceae</taxon>
        <taxon>Cryptococcus</taxon>
        <taxon>Cryptococcus neoformans species complex</taxon>
    </lineage>
</organism>
<comment type="function">
    <text evidence="1">S-adenosyl-L-methionine-dependent protein-arginine N-methyltransferase that methylates the delta-nitrogen atom of arginine residues to form N5-methylarginine (type IV) in target proteins. Monomethylates ribosomal protein L12.</text>
</comment>
<comment type="subunit">
    <text evidence="1">Monomer.</text>
</comment>
<comment type="subcellular location">
    <subcellularLocation>
        <location evidence="1">Cytoplasm</location>
    </subcellularLocation>
    <subcellularLocation>
        <location evidence="1">Nucleus</location>
    </subcellularLocation>
</comment>
<comment type="similarity">
    <text evidence="2">Belongs to the class I-like SAM-binding methyltransferase superfamily. RMT2 methyltransferase family.</text>
</comment>
<comment type="sequence caution" evidence="3">
    <conflict type="erroneous gene model prediction">
        <sequence resource="EMBL-CDS" id="EAL23284"/>
    </conflict>
</comment>
<feature type="chain" id="PRO_0000410245" description="Protein arginine N-methyltransferase 2">
    <location>
        <begin position="1"/>
        <end position="363"/>
    </location>
</feature>
<feature type="repeat" description="ANK 1">
    <location>
        <begin position="22"/>
        <end position="46"/>
    </location>
</feature>
<feature type="repeat" description="ANK 2">
    <location>
        <begin position="48"/>
        <end position="80"/>
    </location>
</feature>
<feature type="domain" description="RMT2" evidence="2">
    <location>
        <begin position="111"/>
        <end position="363"/>
    </location>
</feature>
<feature type="binding site" evidence="2">
    <location>
        <position position="120"/>
    </location>
    <ligand>
        <name>S-adenosyl-L-methionine</name>
        <dbReference type="ChEBI" id="CHEBI:59789"/>
    </ligand>
</feature>
<feature type="binding site" evidence="2">
    <location>
        <begin position="186"/>
        <end position="191"/>
    </location>
    <ligand>
        <name>S-adenosyl-L-methionine</name>
        <dbReference type="ChEBI" id="CHEBI:59789"/>
    </ligand>
</feature>
<feature type="binding site" evidence="2">
    <location>
        <begin position="209"/>
        <end position="211"/>
    </location>
    <ligand>
        <name>S-adenosyl-L-methionine</name>
        <dbReference type="ChEBI" id="CHEBI:59789"/>
    </ligand>
</feature>
<feature type="binding site" evidence="2">
    <location>
        <begin position="236"/>
        <end position="237"/>
    </location>
    <ligand>
        <name>S-adenosyl-L-methionine</name>
        <dbReference type="ChEBI" id="CHEBI:59789"/>
    </ligand>
</feature>
<feature type="binding site" evidence="2">
    <location>
        <position position="265"/>
    </location>
    <ligand>
        <name>S-adenosyl-L-methionine</name>
        <dbReference type="ChEBI" id="CHEBI:59789"/>
    </ligand>
</feature>
<dbReference type="EC" id="2.1.1.-" evidence="1"/>
<dbReference type="EMBL" id="AAEY01000002">
    <property type="protein sequence ID" value="EAL23284.1"/>
    <property type="status" value="ALT_SEQ"/>
    <property type="molecule type" value="Genomic_DNA"/>
</dbReference>
<dbReference type="RefSeq" id="XP_777931.1">
    <property type="nucleotide sequence ID" value="XM_772838.1"/>
</dbReference>
<dbReference type="SMR" id="P0CQ69"/>
<dbReference type="GeneID" id="4933659"/>
<dbReference type="KEGG" id="cnb:CNBA4000"/>
<dbReference type="HOGENOM" id="CLU_033831_1_0_1"/>
<dbReference type="OrthoDB" id="1232at5206"/>
<dbReference type="GO" id="GO:0005737">
    <property type="term" value="C:cytoplasm"/>
    <property type="evidence" value="ECO:0007669"/>
    <property type="project" value="UniProtKB-SubCell"/>
</dbReference>
<dbReference type="GO" id="GO:0005634">
    <property type="term" value="C:nucleus"/>
    <property type="evidence" value="ECO:0007669"/>
    <property type="project" value="UniProtKB-SubCell"/>
</dbReference>
<dbReference type="GO" id="GO:0019702">
    <property type="term" value="F:protein arginine N5-methyltransferase activity"/>
    <property type="evidence" value="ECO:0007669"/>
    <property type="project" value="TreeGrafter"/>
</dbReference>
<dbReference type="GO" id="GO:0032259">
    <property type="term" value="P:methylation"/>
    <property type="evidence" value="ECO:0007669"/>
    <property type="project" value="UniProtKB-KW"/>
</dbReference>
<dbReference type="FunFam" id="3.40.50.150:FF:000430">
    <property type="entry name" value="Arginine N-methyltransferase 2"/>
    <property type="match status" value="1"/>
</dbReference>
<dbReference type="Gene3D" id="1.25.40.20">
    <property type="entry name" value="Ankyrin repeat-containing domain"/>
    <property type="match status" value="1"/>
</dbReference>
<dbReference type="Gene3D" id="3.40.50.150">
    <property type="entry name" value="Vaccinia Virus protein VP39"/>
    <property type="match status" value="1"/>
</dbReference>
<dbReference type="InterPro" id="IPR002110">
    <property type="entry name" value="Ankyrin_rpt"/>
</dbReference>
<dbReference type="InterPro" id="IPR036770">
    <property type="entry name" value="Ankyrin_rpt-contain_sf"/>
</dbReference>
<dbReference type="InterPro" id="IPR017408">
    <property type="entry name" value="Arginine_N-MeTrfase_2"/>
</dbReference>
<dbReference type="InterPro" id="IPR051038">
    <property type="entry name" value="RMT2/GAMT_Mtase"/>
</dbReference>
<dbReference type="InterPro" id="IPR026480">
    <property type="entry name" value="RMT2_dom"/>
</dbReference>
<dbReference type="InterPro" id="IPR029063">
    <property type="entry name" value="SAM-dependent_MTases_sf"/>
</dbReference>
<dbReference type="PANTHER" id="PTHR32379">
    <property type="entry name" value="GUANIDINOACETATE N-METHYLTRANSFERASE"/>
    <property type="match status" value="1"/>
</dbReference>
<dbReference type="PANTHER" id="PTHR32379:SF1">
    <property type="entry name" value="GUANIDINOACETATE N-METHYLTRANSFERASE"/>
    <property type="match status" value="1"/>
</dbReference>
<dbReference type="Pfam" id="PF12796">
    <property type="entry name" value="Ank_2"/>
    <property type="match status" value="1"/>
</dbReference>
<dbReference type="PIRSF" id="PIRSF038148">
    <property type="entry name" value="Arginine_N-mtfrase-2"/>
    <property type="match status" value="1"/>
</dbReference>
<dbReference type="SUPFAM" id="SSF48403">
    <property type="entry name" value="Ankyrin repeat"/>
    <property type="match status" value="1"/>
</dbReference>
<dbReference type="SUPFAM" id="SSF53335">
    <property type="entry name" value="S-adenosyl-L-methionine-dependent methyltransferases"/>
    <property type="match status" value="1"/>
</dbReference>
<dbReference type="PROSITE" id="PS50297">
    <property type="entry name" value="ANK_REP_REGION"/>
    <property type="match status" value="1"/>
</dbReference>
<dbReference type="PROSITE" id="PS50088">
    <property type="entry name" value="ANK_REPEAT"/>
    <property type="match status" value="1"/>
</dbReference>
<dbReference type="PROSITE" id="PS51559">
    <property type="entry name" value="SAM_RMT2"/>
    <property type="match status" value="1"/>
</dbReference>
<name>RMT2_CRYNB</name>
<reference key="1">
    <citation type="journal article" date="2005" name="Science">
        <title>The genome of the basidiomycetous yeast and human pathogen Cryptococcus neoformans.</title>
        <authorList>
            <person name="Loftus B.J."/>
            <person name="Fung E."/>
            <person name="Roncaglia P."/>
            <person name="Rowley D."/>
            <person name="Amedeo P."/>
            <person name="Bruno D."/>
            <person name="Vamathevan J."/>
            <person name="Miranda M."/>
            <person name="Anderson I.J."/>
            <person name="Fraser J.A."/>
            <person name="Allen J.E."/>
            <person name="Bosdet I.E."/>
            <person name="Brent M.R."/>
            <person name="Chiu R."/>
            <person name="Doering T.L."/>
            <person name="Donlin M.J."/>
            <person name="D'Souza C.A."/>
            <person name="Fox D.S."/>
            <person name="Grinberg V."/>
            <person name="Fu J."/>
            <person name="Fukushima M."/>
            <person name="Haas B.J."/>
            <person name="Huang J.C."/>
            <person name="Janbon G."/>
            <person name="Jones S.J.M."/>
            <person name="Koo H.L."/>
            <person name="Krzywinski M.I."/>
            <person name="Kwon-Chung K.J."/>
            <person name="Lengeler K.B."/>
            <person name="Maiti R."/>
            <person name="Marra M.A."/>
            <person name="Marra R.E."/>
            <person name="Mathewson C.A."/>
            <person name="Mitchell T.G."/>
            <person name="Pertea M."/>
            <person name="Riggs F.R."/>
            <person name="Salzberg S.L."/>
            <person name="Schein J.E."/>
            <person name="Shvartsbeyn A."/>
            <person name="Shin H."/>
            <person name="Shumway M."/>
            <person name="Specht C.A."/>
            <person name="Suh B.B."/>
            <person name="Tenney A."/>
            <person name="Utterback T.R."/>
            <person name="Wickes B.L."/>
            <person name="Wortman J.R."/>
            <person name="Wye N.H."/>
            <person name="Kronstad J.W."/>
            <person name="Lodge J.K."/>
            <person name="Heitman J."/>
            <person name="Davis R.W."/>
            <person name="Fraser C.M."/>
            <person name="Hyman R.W."/>
        </authorList>
    </citation>
    <scope>NUCLEOTIDE SEQUENCE [LARGE SCALE GENOMIC DNA]</scope>
    <source>
        <strain>B-3501A</strain>
    </source>
</reference>
<protein>
    <recommendedName>
        <fullName evidence="1">Protein arginine N-methyltransferase 2</fullName>
        <ecNumber evidence="1">2.1.1.-</ecNumber>
    </recommendedName>
    <alternativeName>
        <fullName evidence="1">Protein-arginine N5-methyltransferase</fullName>
    </alternativeName>
    <alternativeName>
        <fullName evidence="1">Type IV protein arginine N-methyltransferase</fullName>
        <shortName evidence="1">Type IV PRMT</shortName>
    </alternativeName>
</protein>